<sequence length="883" mass="100875">MLQLWKVVRPARQLELHRLILLLIAFSLGSMGFLAYYVSTSPKAKEPLPLPLGDCSSGGAAGPGPARPPVPPRPPRPPETARTEPVVLVFVESAYSQLGQEIVAILESSRFRYSTELAPGRGDMPTLTDNTHGRYVLVIYENLLKYVNLDAWSRELLDRYCVEYGVGIIGFFRAHEHSLLSAQLKGFPLFLHSNLGLRDYQVNPSAPLLHLTRPSRLEPGPLPGDDWTIFQSNHSTYEPVLLASLRPAEPAVPGPVLRRARLPTVVQDLGLHDGIQRVLFGHGLSFWLHKLIFVDAVAYLTGKRLCLDLDRYILVDIDDIFVGKEGTRMKVADVEALLTTQNKLRTLVPNFTFNLGFSGKFYHTGTEEEDAGDDMLLKHRKEFWWFPHMWSHMQPHLFHNRSVLADQMRLNKQFALEHGIPTDLGYAVAPHHSGVYPIHTQLYEAWKSVWGIQVTSTEEYPHLRPARYRRGFIHNGIMVLPRQTCGLFTHTIFYNEYPGGSRELDRSIRGGELFLTVLLNPISIFMTHLSNYGNDRLGLYTFESLVRFLQCWTRLRLQTLPPVPLAQKYFELFPQERSPLWQNPCDDKRHKDIWSKEKTCDRLPKFLIVGPQKTGTTAIHFFLSLHPAVTSSFPSPSTFEEIQFFNSPNYHKGIDWYMDFFPVPSNASTDFLFEKSATYFDSEVVPRRGAALLPRAKIITVLTNPADRAYSWYQHQRAHGDPVALNYTFYQVISASSQTPLALRSLQNRCLVPGYYSTHLQRWLTYYPSGQLLIVDGQELRTNPAASMESIQKFLGITPFLNYTRTLRFDDDKGFWCQGLEGGKTRCLGRSKGRRYPDMDTESRLFLTDFFRNHNLELSKLLSRLGQPVPSWLREELQHSSLG</sequence>
<reference key="1">
    <citation type="journal article" date="1998" name="Biochem. J.">
        <title>cDNA cloning, genomic organization and chromosomal localization of human heparan glucosaminyl N-deacetylase/N-sulphotransferase-2.</title>
        <authorList>
            <person name="Humphries D.E."/>
            <person name="Lanciotti J."/>
            <person name="Karlinsky J.B."/>
        </authorList>
    </citation>
    <scope>NUCLEOTIDE SEQUENCE [GENOMIC DNA / MRNA] (ISOFORM 1)</scope>
</reference>
<reference key="2">
    <citation type="journal article" date="2004" name="Genome Res.">
        <title>The status, quality, and expansion of the NIH full-length cDNA project: the Mammalian Gene Collection (MGC).</title>
        <authorList>
            <consortium name="The MGC Project Team"/>
        </authorList>
    </citation>
    <scope>NUCLEOTIDE SEQUENCE [LARGE SCALE MRNA] (ISOFORM 1)</scope>
    <source>
        <tissue>Ovary</tissue>
    </source>
</reference>
<reference key="3">
    <citation type="submission" date="2005-03" db="EMBL/GenBank/DDBJ databases">
        <authorList>
            <person name="Totoki Y."/>
            <person name="Toyoda A."/>
            <person name="Takeda T."/>
            <person name="Sakaki Y."/>
            <person name="Tanaka A."/>
            <person name="Yokoyama S."/>
            <person name="Ohara O."/>
            <person name="Nagase T."/>
            <person name="Kikuno R.F."/>
        </authorList>
    </citation>
    <scope>NUCLEOTIDE SEQUENCE [LARGE SCALE MRNA] OF 14-377 (ISOFORM 2)</scope>
    <source>
        <tissue>Brain</tissue>
    </source>
</reference>
<reference key="4">
    <citation type="journal article" date="2000" name="Biochemistry">
        <title>Overexpression of different isoforms of glucosaminyl N-deacetylase/N-sulfotransferase results in distinct heparan sulfate N-sulfation patterns.</title>
        <authorList>
            <person name="Pikas D.S."/>
            <person name="Eriksson I."/>
            <person name="Kjellen L."/>
        </authorList>
    </citation>
    <scope>FUNCTION</scope>
</reference>
<reference key="5">
    <citation type="journal article" date="2003" name="Glycobiology">
        <title>Antibody-based assay for N-deacetylase activity of heparan sulfate/heparin N-deacetylase/N-sulfotransferase (NDST): novel characteristics of NDST-1 and -2.</title>
        <authorList>
            <person name="van den Born J."/>
            <person name="Pikas D.S."/>
            <person name="Pisa B.J."/>
            <person name="Eriksson I."/>
            <person name="Kjellen L."/>
            <person name="Berden J.H.M."/>
        </authorList>
    </citation>
    <scope>FUNCTION</scope>
    <scope>BIOPHYSICOCHEMICAL PROPERTIES</scope>
</reference>
<reference key="6">
    <citation type="journal article" date="2006" name="Biochem. Biophys. Res. Commun.">
        <title>Characterization of the N-deacetylase domain from the heparan sulfate N-deacetylase/N-sulfotransferase 2.</title>
        <authorList>
            <person name="Duncan M.B."/>
            <person name="Liu M."/>
            <person name="Fox C."/>
            <person name="Liu J."/>
        </authorList>
    </citation>
    <scope>FUNCTION</scope>
</reference>
<reference key="7">
    <citation type="journal article" date="2012" name="Nat. Cell Biol.">
        <title>Syndecan-syntenin-ALIX regulates the biogenesis of exosomes.</title>
        <authorList>
            <person name="Baietti M.F."/>
            <person name="Zhang Z."/>
            <person name="Mortier E."/>
            <person name="Melchior A."/>
            <person name="Degeest G."/>
            <person name="Geeraerts A."/>
            <person name="Ivarsson Y."/>
            <person name="Depoortere F."/>
            <person name="Coomans C."/>
            <person name="Vermeiren E."/>
            <person name="Zimmermann P."/>
            <person name="David G."/>
        </authorList>
    </citation>
    <scope>FUNCTION</scope>
</reference>
<protein>
    <recommendedName>
        <fullName>Bifunctional heparan sulfate N-deacetylase/N-sulfotransferase 2</fullName>
        <ecNumber>2.8.2.8</ecNumber>
    </recommendedName>
    <alternativeName>
        <fullName>Glucosaminyl N-deacetylase/N-sulfotransferase 2</fullName>
        <shortName>NDST-2</shortName>
    </alternativeName>
    <alternativeName>
        <fullName>N-heparan sulfate sulfotransferase 2</fullName>
        <shortName>N-HSST 2</shortName>
    </alternativeName>
    <domain>
        <recommendedName>
            <fullName>Heparan sulfate N-deacetylase 2</fullName>
            <ecNumber>3.-.-.-</ecNumber>
        </recommendedName>
    </domain>
    <domain>
        <recommendedName>
            <fullName>Heparan sulfate N-sulfotransferase 2</fullName>
            <ecNumber>2.8.2.-</ecNumber>
        </recommendedName>
    </domain>
</protein>
<evidence type="ECO:0000250" key="1"/>
<evidence type="ECO:0000255" key="2"/>
<evidence type="ECO:0000256" key="3">
    <source>
        <dbReference type="SAM" id="MobiDB-lite"/>
    </source>
</evidence>
<evidence type="ECO:0000269" key="4">
    <source>
    </source>
</evidence>
<evidence type="ECO:0000269" key="5">
    <source>
    </source>
</evidence>
<evidence type="ECO:0000269" key="6">
    <source>
    </source>
</evidence>
<evidence type="ECO:0000269" key="7">
    <source>
    </source>
</evidence>
<evidence type="ECO:0000303" key="8">
    <source ref="3"/>
</evidence>
<evidence type="ECO:0000305" key="9"/>
<keyword id="KW-0025">Alternative splicing</keyword>
<keyword id="KW-1015">Disulfide bond</keyword>
<keyword id="KW-0325">Glycoprotein</keyword>
<keyword id="KW-0333">Golgi apparatus</keyword>
<keyword id="KW-0378">Hydrolase</keyword>
<keyword id="KW-0472">Membrane</keyword>
<keyword id="KW-0511">Multifunctional enzyme</keyword>
<keyword id="KW-1267">Proteomics identification</keyword>
<keyword id="KW-1185">Reference proteome</keyword>
<keyword id="KW-0735">Signal-anchor</keyword>
<keyword id="KW-0808">Transferase</keyword>
<keyword id="KW-0812">Transmembrane</keyword>
<keyword id="KW-1133">Transmembrane helix</keyword>
<organism>
    <name type="scientific">Homo sapiens</name>
    <name type="common">Human</name>
    <dbReference type="NCBI Taxonomy" id="9606"/>
    <lineage>
        <taxon>Eukaryota</taxon>
        <taxon>Metazoa</taxon>
        <taxon>Chordata</taxon>
        <taxon>Craniata</taxon>
        <taxon>Vertebrata</taxon>
        <taxon>Euteleostomi</taxon>
        <taxon>Mammalia</taxon>
        <taxon>Eutheria</taxon>
        <taxon>Euarchontoglires</taxon>
        <taxon>Primates</taxon>
        <taxon>Haplorrhini</taxon>
        <taxon>Catarrhini</taxon>
        <taxon>Hominidae</taxon>
        <taxon>Homo</taxon>
    </lineage>
</organism>
<dbReference type="EC" id="2.8.2.8"/>
<dbReference type="EC" id="3.-.-.-"/>
<dbReference type="EC" id="2.8.2.-"/>
<dbReference type="EMBL" id="U36601">
    <property type="protein sequence ID" value="AAC27120.1"/>
    <property type="molecule type" value="mRNA"/>
</dbReference>
<dbReference type="EMBL" id="AF042084">
    <property type="protein sequence ID" value="AAB97086.1"/>
    <property type="molecule type" value="Genomic_DNA"/>
</dbReference>
<dbReference type="EMBL" id="BC035711">
    <property type="protein sequence ID" value="AAH35711.1"/>
    <property type="molecule type" value="mRNA"/>
</dbReference>
<dbReference type="EMBL" id="BC110588">
    <property type="protein sequence ID" value="AAI10589.1"/>
    <property type="molecule type" value="mRNA"/>
</dbReference>
<dbReference type="EMBL" id="BC110589">
    <property type="protein sequence ID" value="AAI10590.1"/>
    <property type="molecule type" value="mRNA"/>
</dbReference>
<dbReference type="EMBL" id="AB208870">
    <property type="protein sequence ID" value="BAD92107.1"/>
    <property type="molecule type" value="mRNA"/>
</dbReference>
<dbReference type="CCDS" id="CCDS7335.1">
    <molecule id="P52849-1"/>
</dbReference>
<dbReference type="RefSeq" id="NP_001317036.1">
    <property type="nucleotide sequence ID" value="NM_001330107.1"/>
</dbReference>
<dbReference type="RefSeq" id="NP_003626.1">
    <molecule id="P52849-1"/>
    <property type="nucleotide sequence ID" value="NM_003635.4"/>
</dbReference>
<dbReference type="RefSeq" id="XP_011538612.1">
    <property type="nucleotide sequence ID" value="XM_011540310.2"/>
</dbReference>
<dbReference type="SMR" id="P52849"/>
<dbReference type="BioGRID" id="114081">
    <property type="interactions" value="45"/>
</dbReference>
<dbReference type="FunCoup" id="P52849">
    <property type="interactions" value="2048"/>
</dbReference>
<dbReference type="IntAct" id="P52849">
    <property type="interactions" value="35"/>
</dbReference>
<dbReference type="STRING" id="9606.ENSP00000310657"/>
<dbReference type="GlyCosmos" id="P52849">
    <property type="glycosylation" value="6 sites, No reported glycans"/>
</dbReference>
<dbReference type="GlyGen" id="P52849">
    <property type="glycosylation" value="6 sites"/>
</dbReference>
<dbReference type="iPTMnet" id="P52849"/>
<dbReference type="PhosphoSitePlus" id="P52849"/>
<dbReference type="BioMuta" id="NDST2"/>
<dbReference type="DMDM" id="1708323"/>
<dbReference type="jPOST" id="P52849"/>
<dbReference type="MassIVE" id="P52849"/>
<dbReference type="PaxDb" id="9606-ENSP00000310657"/>
<dbReference type="PeptideAtlas" id="P52849"/>
<dbReference type="ProteomicsDB" id="56545">
    <molecule id="P52849-1"/>
</dbReference>
<dbReference type="ProteomicsDB" id="56546">
    <molecule id="P52849-2"/>
</dbReference>
<dbReference type="Pumba" id="P52849"/>
<dbReference type="Antibodypedia" id="55170">
    <property type="antibodies" value="81 antibodies from 19 providers"/>
</dbReference>
<dbReference type="DNASU" id="8509"/>
<dbReference type="Ensembl" id="ENST00000299641.8">
    <molecule id="P52849-1"/>
    <property type="protein sequence ID" value="ENSP00000299641.5"/>
    <property type="gene ID" value="ENSG00000166507.19"/>
</dbReference>
<dbReference type="Ensembl" id="ENST00000309979.11">
    <molecule id="P52849-1"/>
    <property type="protein sequence ID" value="ENSP00000310657.6"/>
    <property type="gene ID" value="ENSG00000166507.19"/>
</dbReference>
<dbReference type="GeneID" id="8509"/>
<dbReference type="KEGG" id="hsa:8509"/>
<dbReference type="MANE-Select" id="ENST00000309979.11">
    <property type="protein sequence ID" value="ENSP00000310657.6"/>
    <property type="RefSeq nucleotide sequence ID" value="NM_003635.4"/>
    <property type="RefSeq protein sequence ID" value="NP_003626.1"/>
</dbReference>
<dbReference type="UCSC" id="uc001jvk.3">
    <molecule id="P52849-1"/>
    <property type="organism name" value="human"/>
</dbReference>
<dbReference type="AGR" id="HGNC:7681"/>
<dbReference type="CTD" id="8509"/>
<dbReference type="DisGeNET" id="8509"/>
<dbReference type="GeneCards" id="NDST2"/>
<dbReference type="HGNC" id="HGNC:7681">
    <property type="gene designation" value="NDST2"/>
</dbReference>
<dbReference type="HPA" id="ENSG00000166507">
    <property type="expression patterns" value="Low tissue specificity"/>
</dbReference>
<dbReference type="MIM" id="603268">
    <property type="type" value="gene"/>
</dbReference>
<dbReference type="neXtProt" id="NX_P52849"/>
<dbReference type="OpenTargets" id="ENSG00000166507"/>
<dbReference type="PharmGKB" id="PA31487"/>
<dbReference type="VEuPathDB" id="HostDB:ENSG00000166507"/>
<dbReference type="eggNOG" id="KOG3703">
    <property type="taxonomic scope" value="Eukaryota"/>
</dbReference>
<dbReference type="GeneTree" id="ENSGT00940000156237"/>
<dbReference type="HOGENOM" id="CLU_011357_2_0_1"/>
<dbReference type="InParanoid" id="P52849"/>
<dbReference type="OMA" id="CHINPGA"/>
<dbReference type="OrthoDB" id="8958249at2759"/>
<dbReference type="PAN-GO" id="P52849">
    <property type="GO annotations" value="4 GO annotations based on evolutionary models"/>
</dbReference>
<dbReference type="PhylomeDB" id="P52849"/>
<dbReference type="TreeFam" id="TF313193"/>
<dbReference type="BioCyc" id="MetaCyc:HS09410-MONOMER"/>
<dbReference type="BRENDA" id="2.8.2.8">
    <property type="organism ID" value="2681"/>
</dbReference>
<dbReference type="PathwayCommons" id="P52849"/>
<dbReference type="Reactome" id="R-HSA-2022928">
    <property type="pathway name" value="HS-GAG biosynthesis"/>
</dbReference>
<dbReference type="SignaLink" id="P52849"/>
<dbReference type="UniPathway" id="UPA00756"/>
<dbReference type="UniPathway" id="UPA00862"/>
<dbReference type="BioGRID-ORCS" id="8509">
    <property type="hits" value="18 hits in 1150 CRISPR screens"/>
</dbReference>
<dbReference type="ChiTaRS" id="NDST2">
    <property type="organism name" value="human"/>
</dbReference>
<dbReference type="GeneWiki" id="NDST2"/>
<dbReference type="GenomeRNAi" id="8509"/>
<dbReference type="Pharos" id="P52849">
    <property type="development level" value="Tbio"/>
</dbReference>
<dbReference type="PRO" id="PR:P52849"/>
<dbReference type="Proteomes" id="UP000005640">
    <property type="component" value="Chromosome 10"/>
</dbReference>
<dbReference type="RNAct" id="P52849">
    <property type="molecule type" value="protein"/>
</dbReference>
<dbReference type="Bgee" id="ENSG00000166507">
    <property type="expression patterns" value="Expressed in spleen and 97 other cell types or tissues"/>
</dbReference>
<dbReference type="ExpressionAtlas" id="P52849">
    <property type="expression patterns" value="baseline and differential"/>
</dbReference>
<dbReference type="GO" id="GO:0005794">
    <property type="term" value="C:Golgi apparatus"/>
    <property type="evidence" value="ECO:0000318"/>
    <property type="project" value="GO_Central"/>
</dbReference>
<dbReference type="GO" id="GO:0000139">
    <property type="term" value="C:Golgi membrane"/>
    <property type="evidence" value="ECO:0000304"/>
    <property type="project" value="Reactome"/>
</dbReference>
<dbReference type="GO" id="GO:0016020">
    <property type="term" value="C:membrane"/>
    <property type="evidence" value="ECO:0000304"/>
    <property type="project" value="ProtInc"/>
</dbReference>
<dbReference type="GO" id="GO:0019213">
    <property type="term" value="F:deacetylase activity"/>
    <property type="evidence" value="ECO:0000318"/>
    <property type="project" value="GO_Central"/>
</dbReference>
<dbReference type="GO" id="GO:0102140">
    <property type="term" value="F:heparan sulfate N-deacetylase activity"/>
    <property type="evidence" value="ECO:0007669"/>
    <property type="project" value="Ensembl"/>
</dbReference>
<dbReference type="GO" id="GO:0015016">
    <property type="term" value="F:heparan sulfate N-sulfotransferase activity"/>
    <property type="evidence" value="ECO:0000318"/>
    <property type="project" value="GO_Central"/>
</dbReference>
<dbReference type="GO" id="GO:0050119">
    <property type="term" value="F:N-acetylglucosamine deacetylase activity"/>
    <property type="evidence" value="ECO:0000304"/>
    <property type="project" value="Reactome"/>
</dbReference>
<dbReference type="GO" id="GO:0015012">
    <property type="term" value="P:heparan sulfate proteoglycan biosynthetic process"/>
    <property type="evidence" value="ECO:0007669"/>
    <property type="project" value="UniProtKB-UniPathway"/>
</dbReference>
<dbReference type="GO" id="GO:0030210">
    <property type="term" value="P:heparin proteoglycan biosynthetic process"/>
    <property type="evidence" value="ECO:0007669"/>
    <property type="project" value="UniProtKB-UniPathway"/>
</dbReference>
<dbReference type="GO" id="GO:0002448">
    <property type="term" value="P:mast cell mediated immunity"/>
    <property type="evidence" value="ECO:0007669"/>
    <property type="project" value="Ensembl"/>
</dbReference>
<dbReference type="GO" id="GO:0002002">
    <property type="term" value="P:regulation of angiotensin levels in blood"/>
    <property type="evidence" value="ECO:0007669"/>
    <property type="project" value="Ensembl"/>
</dbReference>
<dbReference type="FunFam" id="3.40.50.300:FF:000176">
    <property type="entry name" value="bifunctional heparan sulfate N-deacetylase/N-sulfotransferase 1"/>
    <property type="match status" value="1"/>
</dbReference>
<dbReference type="Gene3D" id="3.40.50.300">
    <property type="entry name" value="P-loop containing nucleotide triphosphate hydrolases"/>
    <property type="match status" value="1"/>
</dbReference>
<dbReference type="InterPro" id="IPR021930">
    <property type="entry name" value="Heparan_SO4_deacetylase_dom"/>
</dbReference>
<dbReference type="InterPro" id="IPR056793">
    <property type="entry name" value="HSNSD_N"/>
</dbReference>
<dbReference type="InterPro" id="IPR037359">
    <property type="entry name" value="NST/OST"/>
</dbReference>
<dbReference type="InterPro" id="IPR027417">
    <property type="entry name" value="P-loop_NTPase"/>
</dbReference>
<dbReference type="InterPro" id="IPR000863">
    <property type="entry name" value="Sulfotransferase_dom"/>
</dbReference>
<dbReference type="PANTHER" id="PTHR10605:SF53">
    <property type="entry name" value="BIFUNCTIONAL HEPARAN SULFATE N-DEACETYLASE_N-SULFOTRANSFERASE 2"/>
    <property type="match status" value="1"/>
</dbReference>
<dbReference type="PANTHER" id="PTHR10605">
    <property type="entry name" value="HEPARAN SULFATE SULFOTRANSFERASE"/>
    <property type="match status" value="1"/>
</dbReference>
<dbReference type="Pfam" id="PF12062">
    <property type="entry name" value="HSNSD-CE"/>
    <property type="match status" value="1"/>
</dbReference>
<dbReference type="Pfam" id="PF25119">
    <property type="entry name" value="HSNSD_N"/>
    <property type="match status" value="1"/>
</dbReference>
<dbReference type="Pfam" id="PF00685">
    <property type="entry name" value="Sulfotransfer_1"/>
    <property type="match status" value="1"/>
</dbReference>
<dbReference type="SUPFAM" id="SSF52540">
    <property type="entry name" value="P-loop containing nucleoside triphosphate hydrolases"/>
    <property type="match status" value="1"/>
</dbReference>
<proteinExistence type="evidence at protein level"/>
<feature type="chain" id="PRO_0000085212" description="Bifunctional heparan sulfate N-deacetylase/N-sulfotransferase 2">
    <location>
        <begin position="1"/>
        <end position="883"/>
    </location>
</feature>
<feature type="topological domain" description="Cytoplasmic" evidence="2">
    <location>
        <begin position="1"/>
        <end position="18"/>
    </location>
</feature>
<feature type="transmembrane region" description="Helical; Signal-anchor for type II membrane protein" evidence="2">
    <location>
        <begin position="19"/>
        <end position="39"/>
    </location>
</feature>
<feature type="topological domain" description="Lumenal" evidence="2">
    <location>
        <begin position="40"/>
        <end position="883"/>
    </location>
</feature>
<feature type="region of interest" description="Heparan sulfate N-deacetylase 2">
    <location>
        <begin position="41"/>
        <end position="597"/>
    </location>
</feature>
<feature type="region of interest" description="Disordered" evidence="3">
    <location>
        <begin position="49"/>
        <end position="81"/>
    </location>
</feature>
<feature type="region of interest" description="Heparan sulfate N-sulfotransferase 2">
    <location>
        <begin position="598"/>
        <end position="883"/>
    </location>
</feature>
<feature type="compositionally biased region" description="Pro residues" evidence="3">
    <location>
        <begin position="65"/>
        <end position="78"/>
    </location>
</feature>
<feature type="active site" description="For sulfotransferase activity" evidence="1">
    <location>
        <position position="613"/>
    </location>
</feature>
<feature type="binding site" evidence="1">
    <location>
        <begin position="613"/>
        <end position="617"/>
    </location>
    <ligand>
        <name>3'-phosphoadenylyl sulfate</name>
        <dbReference type="ChEBI" id="CHEBI:58339"/>
    </ligand>
</feature>
<feature type="binding site" evidence="1">
    <location>
        <position position="711"/>
    </location>
    <ligand>
        <name>3'-phosphoadenylyl sulfate</name>
        <dbReference type="ChEBI" id="CHEBI:58339"/>
    </ligand>
</feature>
<feature type="binding site" evidence="1">
    <location>
        <begin position="832"/>
        <end position="836"/>
    </location>
    <ligand>
        <name>3'-phosphoadenylyl sulfate</name>
        <dbReference type="ChEBI" id="CHEBI:58339"/>
    </ligand>
</feature>
<feature type="glycosylation site" description="N-linked (GlcNAc...) asparagine" evidence="2">
    <location>
        <position position="233"/>
    </location>
</feature>
<feature type="glycosylation site" description="N-linked (GlcNAc...) asparagine" evidence="2">
    <location>
        <position position="350"/>
    </location>
</feature>
<feature type="glycosylation site" description="N-linked (GlcNAc...) asparagine" evidence="2">
    <location>
        <position position="400"/>
    </location>
</feature>
<feature type="glycosylation site" description="N-linked (GlcNAc...) asparagine" evidence="2">
    <location>
        <position position="666"/>
    </location>
</feature>
<feature type="glycosylation site" description="N-linked (GlcNAc...) asparagine" evidence="2">
    <location>
        <position position="726"/>
    </location>
</feature>
<feature type="glycosylation site" description="N-linked (GlcNAc...) asparagine" evidence="2">
    <location>
        <position position="802"/>
    </location>
</feature>
<feature type="disulfide bond" evidence="1">
    <location>
        <begin position="817"/>
        <end position="827"/>
    </location>
</feature>
<feature type="splice variant" id="VSP_017403" description="In isoform 2." evidence="8">
    <original>TEEEDAGDDMLL</original>
    <variation>ELIPLLLWHIIV</variation>
    <location>
        <begin position="366"/>
        <end position="377"/>
    </location>
</feature>
<feature type="splice variant" id="VSP_017404" description="In isoform 2." evidence="8">
    <location>
        <begin position="378"/>
        <end position="883"/>
    </location>
</feature>
<accession>P52849</accession>
<accession>Q2TB32</accession>
<accession>Q59H89</accession>
<name>NDST2_HUMAN</name>
<gene>
    <name type="primary">NDST2</name>
    <name type="synonym">HSST2</name>
</gene>
<comment type="function">
    <text evidence="4 5 6 7">Essential bifunctional enzyme that catalyzes both the N-deacetylation and the N-sulfation of glucosamine (GlcNAc) of the glycosaminoglycan in heparan sulfate. Modifies the GlcNAc-GlcA disaccharide repeating sugar backbone to make N-sulfated heparosan, a prerequisite substrate for later modifications in heparin biosynthesis. Plays a role in determining the extent and pattern of sulfation of heparan sulfate. Required for the exosomal release of SDCBP, CD63 and syndecan (PubMed:22660413).</text>
</comment>
<comment type="catalytic activity">
    <reaction>
        <text>alpha-D-glucosaminyl-[heparan sulfate](n) + 3'-phosphoadenylyl sulfate = N-sulfo-alpha-D-glucosaminyl-[heparan sulfate](n) + adenosine 3',5'-bisphosphate + 2 H(+)</text>
        <dbReference type="Rhea" id="RHEA:21980"/>
        <dbReference type="Rhea" id="RHEA-COMP:9830"/>
        <dbReference type="Rhea" id="RHEA-COMP:14602"/>
        <dbReference type="ChEBI" id="CHEBI:15378"/>
        <dbReference type="ChEBI" id="CHEBI:58339"/>
        <dbReference type="ChEBI" id="CHEBI:58343"/>
        <dbReference type="ChEBI" id="CHEBI:58388"/>
        <dbReference type="ChEBI" id="CHEBI:140572"/>
        <dbReference type="EC" id="2.8.2.8"/>
    </reaction>
</comment>
<comment type="biophysicochemical properties">
    <kinetics>
        <KM evidence="5">4.7 uM for K5 polysaccharide</KM>
        <KM evidence="5">0.76 uM for N-acetylated HS-II</KM>
    </kinetics>
</comment>
<comment type="pathway">
    <text>Glycan metabolism; heparan sulfate biosynthesis.</text>
</comment>
<comment type="pathway">
    <text>Glycan metabolism; heparin biosynthesis.</text>
</comment>
<comment type="subunit">
    <text evidence="1">Monomer.</text>
</comment>
<comment type="subcellular location">
    <subcellularLocation>
        <location evidence="1">Golgi apparatus membrane</location>
        <topology evidence="1">Single-pass type II membrane protein</topology>
    </subcellularLocation>
</comment>
<comment type="alternative products">
    <event type="alternative splicing"/>
    <isoform>
        <id>P52849-1</id>
        <name>1</name>
        <sequence type="displayed"/>
    </isoform>
    <isoform>
        <id>P52849-2</id>
        <name>2</name>
        <sequence type="described" ref="VSP_017403 VSP_017404"/>
    </isoform>
</comment>
<comment type="miscellaneous">
    <text>The presence of 4 different heparan sulfate N-deacetylase/N-sulfotransferase enzymes in mammals, as well as differences in their enzyme activity suggest that some initiate heparan sulfate modification/sulfation reactions, whereas other later on fill in or extend already modified heparan sulfate sequences.</text>
</comment>
<comment type="similarity">
    <text evidence="9">Belongs to the sulfotransferase 1 family. NDST subfamily.</text>
</comment>